<gene>
    <name evidence="9" type="primary">UFL1</name>
</gene>
<organism>
    <name type="scientific">Bos taurus</name>
    <name type="common">Bovine</name>
    <dbReference type="NCBI Taxonomy" id="9913"/>
    <lineage>
        <taxon>Eukaryota</taxon>
        <taxon>Metazoa</taxon>
        <taxon>Chordata</taxon>
        <taxon>Craniata</taxon>
        <taxon>Vertebrata</taxon>
        <taxon>Euteleostomi</taxon>
        <taxon>Mammalia</taxon>
        <taxon>Eutheria</taxon>
        <taxon>Laurasiatheria</taxon>
        <taxon>Artiodactyla</taxon>
        <taxon>Ruminantia</taxon>
        <taxon>Pecora</taxon>
        <taxon>Bovidae</taxon>
        <taxon>Bovinae</taxon>
        <taxon>Bos</taxon>
    </lineage>
</organism>
<proteinExistence type="evidence at transcript level"/>
<sequence length="792" mass="89383">MADAWEEIRRLAADFQRAQFAEATQRLSERNCIEIVNKLIAQKQLEVVHTLDGKEYITPAQISKEMRDELHVRGGRVNIVDLQQAINVDLTHIENRIGDIVKSEKHVQLVLGQLIDENYLDRLAEEVNDKLQESGQVTIAELCKTYDLPGNFLTQALTQRLGRIINGHIDLDNRGVIFTEAFVSRHKARIRGLFSAITRPTAVNSLISRYGFQEQLLYSVLEELVNDGRLRGTVVGGRQDKAVFIPDIYSRTQSTWVDSFLRQNGYLEFDALSRLGIPDAMSYIKKRYKTTQLLFLKAACVGQGLVDQVEASVEEAISSGTWVDIAPLLPSSLSVEDAAILLQHVMRALSKQASAVVFSDTIVVSEKFINDCTDLFSELMHQKAEKEMKNNPVHLITEEDLKQISILESINTSKKDKKDERRRKATEGSGSVRGGGGSNAREYKIKKTKKKGRKDDDSDDESSHTGKKKPEITFMFQDEIEDFLRKHLQDAPEEFISELAEYLIKPLNKTYLEVVHSVYMSSTSSASGTGRKRTIKDLQEEVSNLYNNIRLFEKGMKFFTDDTQAALTKHLLKTVCTDITNLVFNFLASDLMMAVDDPATITSEVRKKILSKLSEETKVALTKLHNSLNEKSIEDFLACLDSAAEACDIMLKKGDKKRERQVLFQHRQALVEQLKVTEDPALTLHLTSVLLFQFSTHSMLHAPGRCVPQIIAFLSSKIPEDQHALLVKYQGLVVKHLVSQNKKTGQGEDPLSDELDKEQEDIINTTRKELQELSSSIKDLVLKSRKSSVTEE</sequence>
<keyword id="KW-0007">Acetylation</keyword>
<keyword id="KW-0158">Chromosome</keyword>
<keyword id="KW-0963">Cytoplasm</keyword>
<keyword id="KW-0227">DNA damage</keyword>
<keyword id="KW-0234">DNA repair</keyword>
<keyword id="KW-0256">Endoplasmic reticulum</keyword>
<keyword id="KW-0472">Membrane</keyword>
<keyword id="KW-0488">Methylation</keyword>
<keyword id="KW-0539">Nucleus</keyword>
<keyword id="KW-0597">Phosphoprotein</keyword>
<keyword id="KW-1185">Reference proteome</keyword>
<keyword id="KW-0808">Transferase</keyword>
<keyword id="KW-0832">Ubl conjugation</keyword>
<keyword id="KW-0833">Ubl conjugation pathway</keyword>
<feature type="initiator methionine" description="Removed" evidence="2">
    <location>
        <position position="1"/>
    </location>
</feature>
<feature type="chain" id="PRO_0000328122" description="E3 UFM1-protein ligase 1">
    <location>
        <begin position="2"/>
        <end position="792"/>
    </location>
</feature>
<feature type="region of interest" description="Required for E3 UFM1-protein ligase activity" evidence="2">
    <location>
        <begin position="2"/>
        <end position="212"/>
    </location>
</feature>
<feature type="region of interest" description="Mediates interaction with DDRGK1" evidence="2">
    <location>
        <begin position="2"/>
        <end position="200"/>
    </location>
</feature>
<feature type="region of interest" description="Involved in CDK5RAP3-binding" evidence="2">
    <location>
        <begin position="121"/>
        <end position="250"/>
    </location>
</feature>
<feature type="region of interest" description="Mediates interaction with TRIP4" evidence="2">
    <location>
        <begin position="200"/>
        <end position="400"/>
    </location>
</feature>
<feature type="region of interest" description="Disordered" evidence="4">
    <location>
        <begin position="412"/>
        <end position="471"/>
    </location>
</feature>
<feature type="region of interest" description="Mediates interaction with CDK5RAP3" evidence="1">
    <location>
        <begin position="488"/>
        <end position="682"/>
    </location>
</feature>
<feature type="compositionally biased region" description="Basic and acidic residues" evidence="4">
    <location>
        <begin position="453"/>
        <end position="471"/>
    </location>
</feature>
<feature type="modified residue" description="N-acetylalanine" evidence="2">
    <location>
        <position position="2"/>
    </location>
</feature>
<feature type="modified residue" description="Omega-N-methylarginine" evidence="3">
    <location>
        <position position="433"/>
    </location>
</feature>
<feature type="modified residue" description="Phosphoserine" evidence="2">
    <location>
        <position position="458"/>
    </location>
</feature>
<feature type="modified residue" description="Phosphothreonine" evidence="2">
    <location>
        <position position="534"/>
    </location>
</feature>
<feature type="modified residue" description="Phosphoserine" evidence="3">
    <location>
        <position position="752"/>
    </location>
</feature>
<reference key="1">
    <citation type="submission" date="2006-10" db="EMBL/GenBank/DDBJ databases">
        <authorList>
            <consortium name="NIH - Mammalian Gene Collection (MGC) project"/>
        </authorList>
    </citation>
    <scope>NUCLEOTIDE SEQUENCE [LARGE SCALE MRNA]</scope>
    <source>
        <strain>Hereford</strain>
        <tissue>Thymus</tissue>
    </source>
</reference>
<reference key="2">
    <citation type="journal article" date="2019" name="Cell Stress Chaperones">
        <title>Protective effects of UFL1 against endoplasmic reticulum stress-induced autophagy in bovine mammary epithelial cells.</title>
        <authorList>
            <person name="Kuang M."/>
            <person name="Li L."/>
            <person name="Li C."/>
            <person name="Wang G."/>
        </authorList>
    </citation>
    <scope>FUNCTION</scope>
    <scope>SUBCELLULAR LOCATION</scope>
    <scope>INDUCTION</scope>
</reference>
<reference key="3">
    <citation type="journal article" date="2019" name="Mol. Immunol.">
        <title>UFL1 modulates NLRP3 inflammasome activation and protects against pyroptosis in LPS-stimulated bovine mammary epithelial cells.</title>
        <authorList>
            <person name="Li C."/>
            <person name="Wang X."/>
            <person name="Kuang M."/>
            <person name="Li L."/>
            <person name="Wang Y."/>
            <person name="Yang F."/>
            <person name="Wang G."/>
        </authorList>
    </citation>
    <scope>FUNCTION</scope>
</reference>
<reference key="4">
    <citation type="journal article" date="2019" name="Oxid. Med. Cell. Longev.">
        <title>UFL1 alleviates lipopolysaccharide-induced cell damage and inflammation via regulation of the TLR4/NF-kappaB pathway in bovine mammary epithelial cells.</title>
        <authorList>
            <person name="Li C."/>
            <person name="Li L."/>
            <person name="Chen K."/>
            <person name="Wang Y."/>
            <person name="Yang F."/>
            <person name="Wang G."/>
        </authorList>
    </citation>
    <scope>FUNCTION</scope>
    <scope>SUBCELLULAR LOCATION</scope>
    <scope>INDUCTION</scope>
</reference>
<reference key="5">
    <citation type="journal article" date="2020" name="Biomolecules">
        <title>UFL1 alleviates LPS-induced apoptosis by regulating the nF-kappaB signaling pathway in bovine ovarian granulosa cells.</title>
        <authorList>
            <person name="Wang X."/>
            <person name="Li C."/>
            <person name="Wang Y."/>
            <person name="Li L."/>
            <person name="Han Z."/>
            <person name="Wang G."/>
        </authorList>
    </citation>
    <scope>FUNCTION</scope>
</reference>
<comment type="function">
    <text evidence="2 3 5 6 7 8">E3 protein ligase that mediates ufmylation, the covalent attachment of the ubiquitin-like modifier UFM1 to lysine residues on target proteins, and which plays a key role in various processes, such as ribosome recycling, response to DNA damage, interferon response or reticulophagy (also called ER-phagy) (By similarity). Catalyzes ufmylation of many protein, such as CD274/PD-L1, CDK5RAP3, CYB5R3, DDRGK1, EIF6, histone H4, MRE11, P4HB, PDCD1/PD-1, TRIP4, RPN1, RPS20/uS10, RPL10/uL16, RPL26/uL24, SYVN1/HRD1 and TP53/p53 (By similarity). As part of the UREL complex, plays a key role in ribosome recycling by catalyzing mono-ufmylation of RPL26/uL24 subunit of the 60S ribosome (By similarity). Ufmylation of RPL26/uL24 occurs on free 60S ribosomes following ribosome dissociation: it weakens the junction between post-termination 60S subunits and SEC61 translocons, promoting release and recycling of the large ribosomal subunit from the endoplasmic reticulum membrane (By similarity). Ufmylation of RPL26/uL24 and subsequent 60S ribosome recycling either take place after normal termination of translation or after ribosome stalling during cotranslational translocation at the endoplasmic reticulum (By similarity). Involved in reticulophagy in response to endoplasmic reticulum stress by mediating ufmylation of proteins such as CYB5R3 and RPN1, thereby promoting lysosomal degradation of ufmylated proteins (By similarity). Ufmylation in response to endoplasmic reticulum stress is essential for processes such as hematopoiesis, blood vessel morphogenesis or inflammatory response (PubMed:30881595). Regulates inflammation in response to endoplasmic reticulum stress by promoting reticulophagy, leading to inhibit the activity of the NF-kappa-B transcription factor (PubMed:30881595, PubMed:31078114, PubMed:31721015, PubMed:32050508). Mediates ufmylation of DDRGK1 and CDK5RAP3; the role of these modifications is however unclear: as both DDRGK1 and CDK5RAP3 act as substrate adapters for ufmylation, it is uncertain whether ufmylation of these proteins is, a collateral effect or is required for ufmylation (By similarity). Acts as a negative regulator of T-cell activation by mediating ufmylation and stabilization of PDCD1/PD-1 (By similarity). Also involved in the response to DNA damage: recruited to double-strand break sites following DNA damage and mediates monoufmylation of histone H4 and ufmylation of MRE11 (By similarity). Mediates ufmylation of TP53/p53, promoting its stability (By similarity). Catalyzes ufmylation of TRIP4, thereby playing a role in nuclear receptor-mediated transcription (By similarity). Required for hematopoietic stem cell function and hematopoiesis (By similarity).</text>
</comment>
<comment type="subunit">
    <text evidence="2">Catalytic component of the UFM1 ribosome E3 ligase (UREL) complex, composed of UFL1, DDRGK1 and CDK5RAP3. Interacts with E2-like enzyme UFC1. Interacts with RELA. Interacts with NBN; promoting recruitment to double-strand breaks following DNA damage. Interacts (when phosphorylated) with YWHAG/14-3-3-gamma; sequestering UFL1 and preventing its association with PDCD1/PD-1 substrate.</text>
</comment>
<comment type="subcellular location">
    <subcellularLocation>
        <location evidence="2">Endoplasmic reticulum membrane</location>
    </subcellularLocation>
    <subcellularLocation>
        <location evidence="5 7">Cytoplasm</location>
        <location evidence="5 7">Cytosol</location>
    </subcellularLocation>
    <subcellularLocation>
        <location evidence="5 7">Nucleus</location>
    </subcellularLocation>
    <subcellularLocation>
        <location evidence="2">Chromosome</location>
    </subcellularLocation>
    <text evidence="2">Recruited to double-strand breaks by the MRE11-RAD50-NBN (MRN) complex following DNA damage.</text>
</comment>
<comment type="induction">
    <text evidence="5 7">Expressed in response to endoplasmic reticulum stress (PubMed:31721015). By lipopolysaccharide (LPS) (PubMed:30881595).</text>
</comment>
<comment type="PTM">
    <text evidence="2">Ubiquitinated, leading to its degradation by the proteasome. Interaction with CDK5RAP3 protects both proteins against ubiquitination and degradation via the proteasome.</text>
</comment>
<comment type="PTM">
    <text evidence="2">Phosphorylation at Thr-534 by AMPK promotes its interaction with YWHAG/14-3-3-gamma, thereby preventing UFL1 association with PDCD1/PD-1 substrate.</text>
</comment>
<comment type="similarity">
    <text evidence="10">Belongs to the UFL1 family.</text>
</comment>
<dbReference type="EC" id="2.3.2.-" evidence="2"/>
<dbReference type="EMBL" id="BC126563">
    <property type="protein sequence ID" value="AAI26564.1"/>
    <property type="molecule type" value="mRNA"/>
</dbReference>
<dbReference type="RefSeq" id="NP_001073745.1">
    <property type="nucleotide sequence ID" value="NM_001080276.2"/>
</dbReference>
<dbReference type="SMR" id="A1A4I9"/>
<dbReference type="FunCoup" id="A1A4I9">
    <property type="interactions" value="4031"/>
</dbReference>
<dbReference type="STRING" id="9913.ENSBTAP00000027202"/>
<dbReference type="PaxDb" id="9913-ENSBTAP00000027202"/>
<dbReference type="GeneID" id="515894"/>
<dbReference type="KEGG" id="bta:515894"/>
<dbReference type="CTD" id="23376"/>
<dbReference type="VEuPathDB" id="HostDB:ENSBTAG00000020410"/>
<dbReference type="eggNOG" id="KOG2235">
    <property type="taxonomic scope" value="Eukaryota"/>
</dbReference>
<dbReference type="HOGENOM" id="CLU_012417_1_0_1"/>
<dbReference type="InParanoid" id="A1A4I9"/>
<dbReference type="OMA" id="CILHASG"/>
<dbReference type="OrthoDB" id="10258297at2759"/>
<dbReference type="TreeFam" id="TF319116"/>
<dbReference type="Reactome" id="R-BTA-983168">
    <property type="pathway name" value="Antigen processing: Ubiquitination &amp; Proteasome degradation"/>
</dbReference>
<dbReference type="Proteomes" id="UP000009136">
    <property type="component" value="Chromosome 9"/>
</dbReference>
<dbReference type="Bgee" id="ENSBTAG00000020410">
    <property type="expression patterns" value="Expressed in spermatocyte and 107 other cell types or tissues"/>
</dbReference>
<dbReference type="GO" id="GO:0005737">
    <property type="term" value="C:cytoplasm"/>
    <property type="evidence" value="ECO:0000314"/>
    <property type="project" value="UniProtKB"/>
</dbReference>
<dbReference type="GO" id="GO:0005829">
    <property type="term" value="C:cytosol"/>
    <property type="evidence" value="ECO:0007669"/>
    <property type="project" value="UniProtKB-SubCell"/>
</dbReference>
<dbReference type="GO" id="GO:0005783">
    <property type="term" value="C:endoplasmic reticulum"/>
    <property type="evidence" value="ECO:0000250"/>
    <property type="project" value="UniProtKB"/>
</dbReference>
<dbReference type="GO" id="GO:0005789">
    <property type="term" value="C:endoplasmic reticulum membrane"/>
    <property type="evidence" value="ECO:0000250"/>
    <property type="project" value="UniProtKB"/>
</dbReference>
<dbReference type="GO" id="GO:0005634">
    <property type="term" value="C:nucleus"/>
    <property type="evidence" value="ECO:0000314"/>
    <property type="project" value="UniProtKB"/>
</dbReference>
<dbReference type="GO" id="GO:0035861">
    <property type="term" value="C:site of double-strand break"/>
    <property type="evidence" value="ECO:0000250"/>
    <property type="project" value="UniProtKB"/>
</dbReference>
<dbReference type="GO" id="GO:0061666">
    <property type="term" value="F:UFM1 ligase activity"/>
    <property type="evidence" value="ECO:0000250"/>
    <property type="project" value="UniProtKB"/>
</dbReference>
<dbReference type="GO" id="GO:0071568">
    <property type="term" value="F:UFM1 transferase activity"/>
    <property type="evidence" value="ECO:0000318"/>
    <property type="project" value="GO_Central"/>
</dbReference>
<dbReference type="GO" id="GO:0000077">
    <property type="term" value="P:DNA damage checkpoint signaling"/>
    <property type="evidence" value="ECO:0000250"/>
    <property type="project" value="UniProtKB"/>
</dbReference>
<dbReference type="GO" id="GO:0006974">
    <property type="term" value="P:DNA damage response"/>
    <property type="evidence" value="ECO:0000250"/>
    <property type="project" value="UniProtKB"/>
</dbReference>
<dbReference type="GO" id="GO:0006281">
    <property type="term" value="P:DNA repair"/>
    <property type="evidence" value="ECO:0007669"/>
    <property type="project" value="UniProtKB-KW"/>
</dbReference>
<dbReference type="GO" id="GO:0030218">
    <property type="term" value="P:erythrocyte differentiation"/>
    <property type="evidence" value="ECO:0000250"/>
    <property type="project" value="UniProtKB"/>
</dbReference>
<dbReference type="GO" id="GO:0060218">
    <property type="term" value="P:hematopoietic stem cell differentiation"/>
    <property type="evidence" value="ECO:0000250"/>
    <property type="project" value="UniProtKB"/>
</dbReference>
<dbReference type="GO" id="GO:1903895">
    <property type="term" value="P:negative regulation of IRE1-mediated unfolded protein response"/>
    <property type="evidence" value="ECO:0000250"/>
    <property type="project" value="UniProtKB"/>
</dbReference>
<dbReference type="GO" id="GO:0032088">
    <property type="term" value="P:negative regulation of NF-kappaB transcription factor activity"/>
    <property type="evidence" value="ECO:0000250"/>
    <property type="project" value="UniProtKB"/>
</dbReference>
<dbReference type="GO" id="GO:0031397">
    <property type="term" value="P:negative regulation of protein ubiquitination"/>
    <property type="evidence" value="ECO:0000250"/>
    <property type="project" value="UniProtKB"/>
</dbReference>
<dbReference type="GO" id="GO:0050868">
    <property type="term" value="P:negative regulation of T cell activation"/>
    <property type="evidence" value="ECO:0000250"/>
    <property type="project" value="UniProtKB"/>
</dbReference>
<dbReference type="GO" id="GO:0002841">
    <property type="term" value="P:negative regulation of T cell mediated immune response to tumor cell"/>
    <property type="evidence" value="ECO:0000250"/>
    <property type="project" value="UniProtKB"/>
</dbReference>
<dbReference type="GO" id="GO:0010508">
    <property type="term" value="P:positive regulation of autophagy"/>
    <property type="evidence" value="ECO:0000314"/>
    <property type="project" value="UniProtKB"/>
</dbReference>
<dbReference type="GO" id="GO:0140501">
    <property type="term" value="P:positive regulation of reticulophagy"/>
    <property type="evidence" value="ECO:0000250"/>
    <property type="project" value="UniProtKB"/>
</dbReference>
<dbReference type="GO" id="GO:1990592">
    <property type="term" value="P:protein K69-linked ufmylation"/>
    <property type="evidence" value="ECO:0000250"/>
    <property type="project" value="UniProtKB"/>
</dbReference>
<dbReference type="GO" id="GO:0071569">
    <property type="term" value="P:protein ufmylation"/>
    <property type="evidence" value="ECO:0000250"/>
    <property type="project" value="UniProtKB"/>
</dbReference>
<dbReference type="GO" id="GO:0043122">
    <property type="term" value="P:regulation of canonical NF-kappaB signal transduction"/>
    <property type="evidence" value="ECO:0000314"/>
    <property type="project" value="UniProtKB"/>
</dbReference>
<dbReference type="GO" id="GO:0050727">
    <property type="term" value="P:regulation of inflammatory response"/>
    <property type="evidence" value="ECO:0000314"/>
    <property type="project" value="UniProtKB"/>
</dbReference>
<dbReference type="GO" id="GO:0033146">
    <property type="term" value="P:regulation of intracellular estrogen receptor signaling pathway"/>
    <property type="evidence" value="ECO:0000250"/>
    <property type="project" value="UniProtKB"/>
</dbReference>
<dbReference type="GO" id="GO:0072344">
    <property type="term" value="P:rescue of stalled ribosome"/>
    <property type="evidence" value="ECO:0000250"/>
    <property type="project" value="UniProtKB"/>
</dbReference>
<dbReference type="GO" id="GO:0034976">
    <property type="term" value="P:response to endoplasmic reticulum stress"/>
    <property type="evidence" value="ECO:0000314"/>
    <property type="project" value="UniProtKB"/>
</dbReference>
<dbReference type="GO" id="GO:0061709">
    <property type="term" value="P:reticulophagy"/>
    <property type="evidence" value="ECO:0000250"/>
    <property type="project" value="UniProtKB"/>
</dbReference>
<dbReference type="GO" id="GO:0032790">
    <property type="term" value="P:ribosome disassembly"/>
    <property type="evidence" value="ECO:0000250"/>
    <property type="project" value="UniProtKB"/>
</dbReference>
<dbReference type="InterPro" id="IPR018611">
    <property type="entry name" value="Ufl1"/>
</dbReference>
<dbReference type="InterPro" id="IPR056761">
    <property type="entry name" value="Ufl1-like_C"/>
</dbReference>
<dbReference type="InterPro" id="IPR056580">
    <property type="entry name" value="Ufl1_dom"/>
</dbReference>
<dbReference type="InterPro" id="IPR056579">
    <property type="entry name" value="Ufl1_N"/>
</dbReference>
<dbReference type="PANTHER" id="PTHR31057">
    <property type="entry name" value="E3 UFM1-PROTEIN LIGASE 1"/>
    <property type="match status" value="1"/>
</dbReference>
<dbReference type="PANTHER" id="PTHR31057:SF0">
    <property type="entry name" value="E3 UFM1-PROTEIN LIGASE 1"/>
    <property type="match status" value="1"/>
</dbReference>
<dbReference type="Pfam" id="PF09743">
    <property type="entry name" value="E3_UFM1_ligase"/>
    <property type="match status" value="1"/>
</dbReference>
<dbReference type="Pfam" id="PF23659">
    <property type="entry name" value="UFL1"/>
    <property type="match status" value="1"/>
</dbReference>
<dbReference type="Pfam" id="PF25041">
    <property type="entry name" value="UFL1_C"/>
    <property type="match status" value="1"/>
</dbReference>
<name>UFL1_BOVIN</name>
<evidence type="ECO:0000250" key="1">
    <source>
        <dbReference type="UniProtKB" id="B2GV24"/>
    </source>
</evidence>
<evidence type="ECO:0000250" key="2">
    <source>
        <dbReference type="UniProtKB" id="O94874"/>
    </source>
</evidence>
<evidence type="ECO:0000250" key="3">
    <source>
        <dbReference type="UniProtKB" id="Q8CCJ3"/>
    </source>
</evidence>
<evidence type="ECO:0000256" key="4">
    <source>
        <dbReference type="SAM" id="MobiDB-lite"/>
    </source>
</evidence>
<evidence type="ECO:0000269" key="5">
    <source>
    </source>
</evidence>
<evidence type="ECO:0000269" key="6">
    <source>
    </source>
</evidence>
<evidence type="ECO:0000269" key="7">
    <source>
    </source>
</evidence>
<evidence type="ECO:0000269" key="8">
    <source>
    </source>
</evidence>
<evidence type="ECO:0000303" key="9">
    <source>
    </source>
</evidence>
<evidence type="ECO:0000305" key="10"/>
<protein>
    <recommendedName>
        <fullName evidence="10">E3 UFM1-protein ligase 1</fullName>
        <ecNumber evidence="2">2.3.2.-</ecNumber>
    </recommendedName>
    <alternativeName>
        <fullName evidence="9">E3 UFM1-protein transferase 1</fullName>
    </alternativeName>
</protein>
<accession>A1A4I9</accession>